<name>SYI_BIFLO</name>
<dbReference type="EC" id="6.1.1.5" evidence="1"/>
<dbReference type="EMBL" id="AE014295">
    <property type="protein sequence ID" value="AAN25560.1"/>
    <property type="molecule type" value="Genomic_DNA"/>
</dbReference>
<dbReference type="RefSeq" id="NP_696924.1">
    <property type="nucleotide sequence ID" value="NC_004307.2"/>
</dbReference>
<dbReference type="RefSeq" id="WP_011068832.1">
    <property type="nucleotide sequence ID" value="NC_004307.2"/>
</dbReference>
<dbReference type="SMR" id="Q8G3I2"/>
<dbReference type="STRING" id="206672.BL1777"/>
<dbReference type="EnsemblBacteria" id="AAN25560">
    <property type="protein sequence ID" value="AAN25560"/>
    <property type="gene ID" value="BL1777"/>
</dbReference>
<dbReference type="KEGG" id="blo:BL1777"/>
<dbReference type="PATRIC" id="fig|206672.9.peg.1832"/>
<dbReference type="HOGENOM" id="CLU_001493_1_1_11"/>
<dbReference type="OrthoDB" id="9810365at2"/>
<dbReference type="PhylomeDB" id="Q8G3I2"/>
<dbReference type="Proteomes" id="UP000000439">
    <property type="component" value="Chromosome"/>
</dbReference>
<dbReference type="GO" id="GO:0005737">
    <property type="term" value="C:cytoplasm"/>
    <property type="evidence" value="ECO:0007669"/>
    <property type="project" value="UniProtKB-SubCell"/>
</dbReference>
<dbReference type="GO" id="GO:0002161">
    <property type="term" value="F:aminoacyl-tRNA deacylase activity"/>
    <property type="evidence" value="ECO:0007669"/>
    <property type="project" value="InterPro"/>
</dbReference>
<dbReference type="GO" id="GO:0005524">
    <property type="term" value="F:ATP binding"/>
    <property type="evidence" value="ECO:0007669"/>
    <property type="project" value="UniProtKB-UniRule"/>
</dbReference>
<dbReference type="GO" id="GO:0004822">
    <property type="term" value="F:isoleucine-tRNA ligase activity"/>
    <property type="evidence" value="ECO:0007669"/>
    <property type="project" value="UniProtKB-UniRule"/>
</dbReference>
<dbReference type="GO" id="GO:0000049">
    <property type="term" value="F:tRNA binding"/>
    <property type="evidence" value="ECO:0007669"/>
    <property type="project" value="InterPro"/>
</dbReference>
<dbReference type="GO" id="GO:0008270">
    <property type="term" value="F:zinc ion binding"/>
    <property type="evidence" value="ECO:0007669"/>
    <property type="project" value="UniProtKB-UniRule"/>
</dbReference>
<dbReference type="GO" id="GO:0006428">
    <property type="term" value="P:isoleucyl-tRNA aminoacylation"/>
    <property type="evidence" value="ECO:0007669"/>
    <property type="project" value="UniProtKB-UniRule"/>
</dbReference>
<dbReference type="CDD" id="cd07961">
    <property type="entry name" value="Anticodon_Ia_Ile_ABEc"/>
    <property type="match status" value="1"/>
</dbReference>
<dbReference type="CDD" id="cd00818">
    <property type="entry name" value="IleRS_core"/>
    <property type="match status" value="1"/>
</dbReference>
<dbReference type="FunFam" id="3.40.50.620:FF:000063">
    <property type="entry name" value="Isoleucine--tRNA ligase"/>
    <property type="match status" value="1"/>
</dbReference>
<dbReference type="FunFam" id="3.40.50.620:FF:000075">
    <property type="entry name" value="Isoleucine--tRNA ligase"/>
    <property type="match status" value="1"/>
</dbReference>
<dbReference type="Gene3D" id="3.40.50.620">
    <property type="entry name" value="HUPs"/>
    <property type="match status" value="2"/>
</dbReference>
<dbReference type="Gene3D" id="1.10.730.10">
    <property type="entry name" value="Isoleucyl-tRNA Synthetase, Domain 1"/>
    <property type="match status" value="1"/>
</dbReference>
<dbReference type="Gene3D" id="3.90.740.10">
    <property type="entry name" value="Valyl/Leucyl/Isoleucyl-tRNA synthetase, editing domain"/>
    <property type="match status" value="1"/>
</dbReference>
<dbReference type="HAMAP" id="MF_02003">
    <property type="entry name" value="Ile_tRNA_synth_type2"/>
    <property type="match status" value="1"/>
</dbReference>
<dbReference type="InterPro" id="IPR001412">
    <property type="entry name" value="aa-tRNA-synth_I_CS"/>
</dbReference>
<dbReference type="InterPro" id="IPR002300">
    <property type="entry name" value="aa-tRNA-synth_Ia"/>
</dbReference>
<dbReference type="InterPro" id="IPR033709">
    <property type="entry name" value="Anticodon_Ile_ABEc"/>
</dbReference>
<dbReference type="InterPro" id="IPR002301">
    <property type="entry name" value="Ile-tRNA-ligase"/>
</dbReference>
<dbReference type="InterPro" id="IPR023586">
    <property type="entry name" value="Ile-tRNA-ligase_type2"/>
</dbReference>
<dbReference type="InterPro" id="IPR013155">
    <property type="entry name" value="M/V/L/I-tRNA-synth_anticd-bd"/>
</dbReference>
<dbReference type="InterPro" id="IPR014729">
    <property type="entry name" value="Rossmann-like_a/b/a_fold"/>
</dbReference>
<dbReference type="InterPro" id="IPR009080">
    <property type="entry name" value="tRNAsynth_Ia_anticodon-bd"/>
</dbReference>
<dbReference type="InterPro" id="IPR009008">
    <property type="entry name" value="Val/Leu/Ile-tRNA-synth_edit"/>
</dbReference>
<dbReference type="NCBIfam" id="TIGR00392">
    <property type="entry name" value="ileS"/>
    <property type="match status" value="1"/>
</dbReference>
<dbReference type="PANTHER" id="PTHR42780:SF1">
    <property type="entry name" value="ISOLEUCINE--TRNA LIGASE, CYTOPLASMIC"/>
    <property type="match status" value="1"/>
</dbReference>
<dbReference type="PANTHER" id="PTHR42780">
    <property type="entry name" value="SOLEUCYL-TRNA SYNTHETASE"/>
    <property type="match status" value="1"/>
</dbReference>
<dbReference type="Pfam" id="PF08264">
    <property type="entry name" value="Anticodon_1"/>
    <property type="match status" value="1"/>
</dbReference>
<dbReference type="Pfam" id="PF19302">
    <property type="entry name" value="DUF5915"/>
    <property type="match status" value="1"/>
</dbReference>
<dbReference type="Pfam" id="PF00133">
    <property type="entry name" value="tRNA-synt_1"/>
    <property type="match status" value="1"/>
</dbReference>
<dbReference type="PRINTS" id="PR00984">
    <property type="entry name" value="TRNASYNTHILE"/>
</dbReference>
<dbReference type="SUPFAM" id="SSF47323">
    <property type="entry name" value="Anticodon-binding domain of a subclass of class I aminoacyl-tRNA synthetases"/>
    <property type="match status" value="1"/>
</dbReference>
<dbReference type="SUPFAM" id="SSF52374">
    <property type="entry name" value="Nucleotidylyl transferase"/>
    <property type="match status" value="1"/>
</dbReference>
<dbReference type="SUPFAM" id="SSF50677">
    <property type="entry name" value="ValRS/IleRS/LeuRS editing domain"/>
    <property type="match status" value="1"/>
</dbReference>
<dbReference type="PROSITE" id="PS00178">
    <property type="entry name" value="AA_TRNA_LIGASE_I"/>
    <property type="match status" value="1"/>
</dbReference>
<evidence type="ECO:0000255" key="1">
    <source>
        <dbReference type="HAMAP-Rule" id="MF_02003"/>
    </source>
</evidence>
<evidence type="ECO:0000256" key="2">
    <source>
        <dbReference type="SAM" id="MobiDB-lite"/>
    </source>
</evidence>
<reference key="1">
    <citation type="journal article" date="2002" name="Proc. Natl. Acad. Sci. U.S.A.">
        <title>The genome sequence of Bifidobacterium longum reflects its adaptation to the human gastrointestinal tract.</title>
        <authorList>
            <person name="Schell M.A."/>
            <person name="Karmirantzou M."/>
            <person name="Snel B."/>
            <person name="Vilanova D."/>
            <person name="Berger B."/>
            <person name="Pessi G."/>
            <person name="Zwahlen M.-C."/>
            <person name="Desiere F."/>
            <person name="Bork P."/>
            <person name="Delley M."/>
            <person name="Pridmore R.D."/>
            <person name="Arigoni F."/>
        </authorList>
    </citation>
    <scope>NUCLEOTIDE SEQUENCE [LARGE SCALE GENOMIC DNA]</scope>
    <source>
        <strain>NCC 2705</strain>
    </source>
</reference>
<organism>
    <name type="scientific">Bifidobacterium longum (strain NCC 2705)</name>
    <dbReference type="NCBI Taxonomy" id="206672"/>
    <lineage>
        <taxon>Bacteria</taxon>
        <taxon>Bacillati</taxon>
        <taxon>Actinomycetota</taxon>
        <taxon>Actinomycetes</taxon>
        <taxon>Bifidobacteriales</taxon>
        <taxon>Bifidobacteriaceae</taxon>
        <taxon>Bifidobacterium</taxon>
    </lineage>
</organism>
<comment type="function">
    <text evidence="1">Catalyzes the attachment of isoleucine to tRNA(Ile). As IleRS can inadvertently accommodate and process structurally similar amino acids such as valine, to avoid such errors it has two additional distinct tRNA(Ile)-dependent editing activities. One activity is designated as 'pretransfer' editing and involves the hydrolysis of activated Val-AMP. The other activity is designated 'posttransfer' editing and involves deacylation of mischarged Val-tRNA(Ile).</text>
</comment>
<comment type="catalytic activity">
    <reaction evidence="1">
        <text>tRNA(Ile) + L-isoleucine + ATP = L-isoleucyl-tRNA(Ile) + AMP + diphosphate</text>
        <dbReference type="Rhea" id="RHEA:11060"/>
        <dbReference type="Rhea" id="RHEA-COMP:9666"/>
        <dbReference type="Rhea" id="RHEA-COMP:9695"/>
        <dbReference type="ChEBI" id="CHEBI:30616"/>
        <dbReference type="ChEBI" id="CHEBI:33019"/>
        <dbReference type="ChEBI" id="CHEBI:58045"/>
        <dbReference type="ChEBI" id="CHEBI:78442"/>
        <dbReference type="ChEBI" id="CHEBI:78528"/>
        <dbReference type="ChEBI" id="CHEBI:456215"/>
        <dbReference type="EC" id="6.1.1.5"/>
    </reaction>
</comment>
<comment type="cofactor">
    <cofactor evidence="1">
        <name>Zn(2+)</name>
        <dbReference type="ChEBI" id="CHEBI:29105"/>
    </cofactor>
</comment>
<comment type="subunit">
    <text evidence="1">Monomer.</text>
</comment>
<comment type="subcellular location">
    <subcellularLocation>
        <location evidence="1">Cytoplasm</location>
    </subcellularLocation>
</comment>
<comment type="domain">
    <text evidence="1">IleRS has two distinct active sites: one for aminoacylation and one for editing. The misactivated valine is translocated from the active site to the editing site, which sterically excludes the correctly activated isoleucine. The single editing site contains two valyl binding pockets, one specific for each substrate (Val-AMP or Val-tRNA(Ile)).</text>
</comment>
<comment type="similarity">
    <text evidence="1">Belongs to the class-I aminoacyl-tRNA synthetase family. IleS type 2 subfamily.</text>
</comment>
<proteinExistence type="inferred from homology"/>
<gene>
    <name evidence="1" type="primary">ileS</name>
    <name type="ordered locus">BL1777</name>
</gene>
<sequence>MSENVYPKANEGGETAHVAPNPSFPDMEETVLDYWDKDDTFQKSVERNPSGDHSQNEFVFFDGPPFANGLPHYGHLLTGYAKDVIPRYQTMKGRKVNRVFGWDTHGLPAELEAQKELGIDSVDQIEKMGIDKFNDACRASVLKYTNEWQNYVHRQARWVDFEHGYKTLNIPYMESVMWAFKQLYDKGLAYQGYRVLPYCPKDRTPLSAHELRMDADVYQDRQDTTVSVAVKMRDEDDAYAVFWTTTPWTVPTNFAIVVGGDIDYVEVRPTEGKFAGKKFYLGKDLLPHYEKELGENYEVVRELKGSELEGRRYYPVFPYFAGDEAESEGHVPGPNGYTIFTADYVDTVEGTGLVHQAPYGEDDMNTLNAKGIKSTDVLDDGCRFTAQCPDYEGDFVFDANLPILRNLRAGDGPLAEIPEERRAILFQEKSYVHSYPHCWRCATPLIYKPVSSWFVSVTKIKPRLLELNQQINWIPGNVKDGQFGKWLANARDWSISRNRFWGSPIPVWVSDDPKYPRVDVYGSLEELKADFGDYPRDKDGNINMHRPWIDNLVRVNPDDPTGKSHMHRISDVLDCWFESGSMSFAQFHYPFENKEKFEQHFPADYIVEYIGQTRGWFYLLHVMATALFDRPAFKNVICHGIVLGSDGQKMSKHLRNYPDVNGVFDKYGSDAMRWFLMSSPILRGGNLIVTADGIRDTVRQVMLPVWSSYYFFTLYANAANGGAGFDARQLRADEVAGLPEMDRYLLARTRRLVLAAEKSLNEFAISDACDAVSDFIDVLTNWYIRNTRDRFWNEDASAFNTLYTVLEAFMRVLAPLAPMEAESVWRGLTGGESVHLAEWPFVVDEKTGADTELGRVLVDDPALVDAMEKVREVVSGTLSLRKAAKIRVRQPLSKLTVVAGNVEAVKAYDDLLKAELNIKNIEFSTLQDAAAHGLKIVHELRVNARAAGPRLGKQVQFAIKASKSGDWHVDAASGAPVVSTPSGDLALVEGEYELINRVEEENATEAAASVSAALPTGGFVILDTALDADLLAEGYARDVIRSVQDARKAADLDIADRISLVLTVPAVDVAKVEQFRDLIAHETLATSFEVKEGAELGVEVVKA</sequence>
<feature type="chain" id="PRO_0000098524" description="Isoleucine--tRNA ligase">
    <location>
        <begin position="1"/>
        <end position="1103"/>
    </location>
</feature>
<feature type="region of interest" description="Disordered" evidence="2">
    <location>
        <begin position="1"/>
        <end position="25"/>
    </location>
</feature>
<feature type="short sequence motif" description="'HIGH' region">
    <location>
        <begin position="65"/>
        <end position="75"/>
    </location>
</feature>
<feature type="short sequence motif" description="'KMSKS' region">
    <location>
        <begin position="649"/>
        <end position="653"/>
    </location>
</feature>
<feature type="binding site" evidence="1">
    <location>
        <position position="652"/>
    </location>
    <ligand>
        <name>ATP</name>
        <dbReference type="ChEBI" id="CHEBI:30616"/>
    </ligand>
</feature>
<protein>
    <recommendedName>
        <fullName evidence="1">Isoleucine--tRNA ligase</fullName>
        <ecNumber evidence="1">6.1.1.5</ecNumber>
    </recommendedName>
    <alternativeName>
        <fullName evidence="1">Isoleucyl-tRNA synthetase</fullName>
        <shortName evidence="1">IleRS</shortName>
    </alternativeName>
</protein>
<accession>Q8G3I2</accession>
<keyword id="KW-0030">Aminoacyl-tRNA synthetase</keyword>
<keyword id="KW-0067">ATP-binding</keyword>
<keyword id="KW-0963">Cytoplasm</keyword>
<keyword id="KW-0436">Ligase</keyword>
<keyword id="KW-0479">Metal-binding</keyword>
<keyword id="KW-0547">Nucleotide-binding</keyword>
<keyword id="KW-0648">Protein biosynthesis</keyword>
<keyword id="KW-1185">Reference proteome</keyword>
<keyword id="KW-0862">Zinc</keyword>